<organism>
    <name type="scientific">Homo sapiens</name>
    <name type="common">Human</name>
    <dbReference type="NCBI Taxonomy" id="9606"/>
    <lineage>
        <taxon>Eukaryota</taxon>
        <taxon>Metazoa</taxon>
        <taxon>Chordata</taxon>
        <taxon>Craniata</taxon>
        <taxon>Vertebrata</taxon>
        <taxon>Euteleostomi</taxon>
        <taxon>Mammalia</taxon>
        <taxon>Eutheria</taxon>
        <taxon>Euarchontoglires</taxon>
        <taxon>Primates</taxon>
        <taxon>Haplorrhini</taxon>
        <taxon>Catarrhini</taxon>
        <taxon>Hominidae</taxon>
        <taxon>Homo</taxon>
    </lineage>
</organism>
<proteinExistence type="evidence at protein level"/>
<gene>
    <name evidence="14" type="primary">BSN</name>
    <name type="synonym">KIAA0434</name>
    <name evidence="12" type="synonym">ZNF231</name>
</gene>
<evidence type="ECO:0000250" key="1"/>
<evidence type="ECO:0000250" key="2">
    <source>
        <dbReference type="UniProtKB" id="O35078"/>
    </source>
</evidence>
<evidence type="ECO:0000250" key="3">
    <source>
        <dbReference type="UniProtKB" id="O88737"/>
    </source>
</evidence>
<evidence type="ECO:0000250" key="4">
    <source>
        <dbReference type="UniProtKB" id="O88778"/>
    </source>
</evidence>
<evidence type="ECO:0000255" key="5"/>
<evidence type="ECO:0000256" key="6">
    <source>
        <dbReference type="SAM" id="MobiDB-lite"/>
    </source>
</evidence>
<evidence type="ECO:0000269" key="7">
    <source>
    </source>
</evidence>
<evidence type="ECO:0000269" key="8">
    <source>
    </source>
</evidence>
<evidence type="ECO:0000269" key="9">
    <source>
    </source>
</evidence>
<evidence type="ECO:0000269" key="10">
    <source>
    </source>
</evidence>
<evidence type="ECO:0000269" key="11">
    <source>
    </source>
</evidence>
<evidence type="ECO:0000303" key="12">
    <source>
    </source>
</evidence>
<evidence type="ECO:0000305" key="13"/>
<evidence type="ECO:0000312" key="14">
    <source>
        <dbReference type="HGNC" id="HGNC:1117"/>
    </source>
</evidence>
<accession>Q9UPA5</accession>
<accession>O43161</accession>
<accession>Q7LGH3</accession>
<protein>
    <recommendedName>
        <fullName evidence="13">Protein bassoon</fullName>
    </recommendedName>
    <alternativeName>
        <fullName>Zinc finger protein 231</fullName>
    </alternativeName>
</protein>
<dbReference type="EMBL" id="AF052224">
    <property type="protein sequence ID" value="AAC83555.1"/>
    <property type="molecule type" value="mRNA"/>
</dbReference>
<dbReference type="EMBL" id="AC099668">
    <property type="status" value="NOT_ANNOTATED_CDS"/>
    <property type="molecule type" value="Genomic_DNA"/>
</dbReference>
<dbReference type="EMBL" id="AC104452">
    <property type="status" value="NOT_ANNOTATED_CDS"/>
    <property type="molecule type" value="Genomic_DNA"/>
</dbReference>
<dbReference type="EMBL" id="Y18448">
    <property type="protein sequence ID" value="CAA77176.1"/>
    <property type="molecule type" value="Genomic_DNA"/>
</dbReference>
<dbReference type="EMBL" id="Y18449">
    <property type="protein sequence ID" value="CAA77176.1"/>
    <property type="status" value="JOINED"/>
    <property type="molecule type" value="Genomic_DNA"/>
</dbReference>
<dbReference type="EMBL" id="Y18450">
    <property type="protein sequence ID" value="CAA77176.1"/>
    <property type="status" value="JOINED"/>
    <property type="molecule type" value="Genomic_DNA"/>
</dbReference>
<dbReference type="EMBL" id="Y18451">
    <property type="protein sequence ID" value="CAA77176.1"/>
    <property type="status" value="JOINED"/>
    <property type="molecule type" value="Genomic_DNA"/>
</dbReference>
<dbReference type="EMBL" id="AB007894">
    <property type="protein sequence ID" value="BAA23707.1"/>
    <property type="molecule type" value="mRNA"/>
</dbReference>
<dbReference type="CCDS" id="CCDS2800.1"/>
<dbReference type="PIR" id="T00062">
    <property type="entry name" value="T00062"/>
</dbReference>
<dbReference type="RefSeq" id="NP_003449.2">
    <property type="nucleotide sequence ID" value="NM_003458.4"/>
</dbReference>
<dbReference type="RefSeq" id="XP_047305105.1">
    <property type="nucleotide sequence ID" value="XM_047449149.1"/>
</dbReference>
<dbReference type="RefSeq" id="XP_047305106.1">
    <property type="nucleotide sequence ID" value="XM_047449150.1"/>
</dbReference>
<dbReference type="RefSeq" id="XP_047305107.1">
    <property type="nucleotide sequence ID" value="XM_047449151.1"/>
</dbReference>
<dbReference type="SMR" id="Q9UPA5"/>
<dbReference type="BioGRID" id="114441">
    <property type="interactions" value="24"/>
</dbReference>
<dbReference type="FunCoup" id="Q9UPA5">
    <property type="interactions" value="233"/>
</dbReference>
<dbReference type="IntAct" id="Q9UPA5">
    <property type="interactions" value="10"/>
</dbReference>
<dbReference type="STRING" id="9606.ENSP00000296452"/>
<dbReference type="GlyCosmos" id="Q9UPA5">
    <property type="glycosylation" value="74 sites, 1 glycan"/>
</dbReference>
<dbReference type="GlyGen" id="Q9UPA5">
    <property type="glycosylation" value="89 sites, 1 O-linked glycan (79 sites)"/>
</dbReference>
<dbReference type="iPTMnet" id="Q9UPA5"/>
<dbReference type="PhosphoSitePlus" id="Q9UPA5"/>
<dbReference type="SwissPalm" id="Q9UPA5"/>
<dbReference type="BioMuta" id="BSN"/>
<dbReference type="DMDM" id="229463040"/>
<dbReference type="jPOST" id="Q9UPA5"/>
<dbReference type="MassIVE" id="Q9UPA5"/>
<dbReference type="PaxDb" id="9606-ENSP00000296452"/>
<dbReference type="PeptideAtlas" id="Q9UPA5"/>
<dbReference type="ProteomicsDB" id="85364"/>
<dbReference type="Antibodypedia" id="13612">
    <property type="antibodies" value="129 antibodies from 23 providers"/>
</dbReference>
<dbReference type="DNASU" id="8927"/>
<dbReference type="Ensembl" id="ENST00000296452.5">
    <property type="protein sequence ID" value="ENSP00000296452.4"/>
    <property type="gene ID" value="ENSG00000164061.5"/>
</dbReference>
<dbReference type="GeneID" id="8927"/>
<dbReference type="KEGG" id="hsa:8927"/>
<dbReference type="MANE-Select" id="ENST00000296452.5">
    <property type="protein sequence ID" value="ENSP00000296452.4"/>
    <property type="RefSeq nucleotide sequence ID" value="NM_003458.4"/>
    <property type="RefSeq protein sequence ID" value="NP_003449.2"/>
</dbReference>
<dbReference type="UCSC" id="uc003cxe.5">
    <property type="organism name" value="human"/>
</dbReference>
<dbReference type="AGR" id="HGNC:1117"/>
<dbReference type="CTD" id="8927"/>
<dbReference type="DisGeNET" id="8927"/>
<dbReference type="GeneCards" id="BSN"/>
<dbReference type="HGNC" id="HGNC:1117">
    <property type="gene designation" value="BSN"/>
</dbReference>
<dbReference type="HPA" id="ENSG00000164061">
    <property type="expression patterns" value="Tissue enriched (brain)"/>
</dbReference>
<dbReference type="MalaCards" id="BSN"/>
<dbReference type="MIM" id="604020">
    <property type="type" value="gene"/>
</dbReference>
<dbReference type="neXtProt" id="NX_Q9UPA5"/>
<dbReference type="OpenTargets" id="ENSG00000164061"/>
<dbReference type="PharmGKB" id="PA25434"/>
<dbReference type="VEuPathDB" id="HostDB:ENSG00000164061"/>
<dbReference type="eggNOG" id="ENOG502QSYS">
    <property type="taxonomic scope" value="Eukaryota"/>
</dbReference>
<dbReference type="GeneTree" id="ENSGT00620000087961"/>
<dbReference type="HOGENOM" id="CLU_000104_1_0_1"/>
<dbReference type="InParanoid" id="Q9UPA5"/>
<dbReference type="OMA" id="GMYRPYV"/>
<dbReference type="OrthoDB" id="10059918at2759"/>
<dbReference type="PAN-GO" id="Q9UPA5">
    <property type="GO annotations" value="7 GO annotations based on evolutionary models"/>
</dbReference>
<dbReference type="PhylomeDB" id="Q9UPA5"/>
<dbReference type="TreeFam" id="TF326082"/>
<dbReference type="PathwayCommons" id="Q9UPA5"/>
<dbReference type="Reactome" id="R-HSA-9662360">
    <property type="pathway name" value="Sensory processing of sound by inner hair cells of the cochlea"/>
</dbReference>
<dbReference type="SignaLink" id="Q9UPA5"/>
<dbReference type="BioGRID-ORCS" id="8927">
    <property type="hits" value="12 hits in 1149 CRISPR screens"/>
</dbReference>
<dbReference type="CD-CODE" id="FB4E32DD">
    <property type="entry name" value="Presynaptic clusters and postsynaptic densities"/>
</dbReference>
<dbReference type="ChiTaRS" id="BSN">
    <property type="organism name" value="human"/>
</dbReference>
<dbReference type="GenomeRNAi" id="8927"/>
<dbReference type="Pharos" id="Q9UPA5">
    <property type="development level" value="Tbio"/>
</dbReference>
<dbReference type="PRO" id="PR:Q9UPA5"/>
<dbReference type="Proteomes" id="UP000005640">
    <property type="component" value="Chromosome 3"/>
</dbReference>
<dbReference type="RNAct" id="Q9UPA5">
    <property type="molecule type" value="protein"/>
</dbReference>
<dbReference type="Bgee" id="ENSG00000164061">
    <property type="expression patterns" value="Expressed in frontal pole and 109 other cell types or tissues"/>
</dbReference>
<dbReference type="GO" id="GO:0030424">
    <property type="term" value="C:axon"/>
    <property type="evidence" value="ECO:0000318"/>
    <property type="project" value="GO_Central"/>
</dbReference>
<dbReference type="GO" id="GO:0009986">
    <property type="term" value="C:cell surface"/>
    <property type="evidence" value="ECO:0007669"/>
    <property type="project" value="Ensembl"/>
</dbReference>
<dbReference type="GO" id="GO:0098683">
    <property type="term" value="C:cochlear hair cell ribbon synapse"/>
    <property type="evidence" value="ECO:0007669"/>
    <property type="project" value="Ensembl"/>
</dbReference>
<dbReference type="GO" id="GO:0048788">
    <property type="term" value="C:cytoskeleton of presynaptic active zone"/>
    <property type="evidence" value="ECO:0000250"/>
    <property type="project" value="BHF-UCL"/>
</dbReference>
<dbReference type="GO" id="GO:0030425">
    <property type="term" value="C:dendrite"/>
    <property type="evidence" value="ECO:0000250"/>
    <property type="project" value="BHF-UCL"/>
</dbReference>
<dbReference type="GO" id="GO:0060076">
    <property type="term" value="C:excitatory synapse"/>
    <property type="evidence" value="ECO:0000250"/>
    <property type="project" value="ParkinsonsUK-UCL"/>
</dbReference>
<dbReference type="GO" id="GO:0098982">
    <property type="term" value="C:GABA-ergic synapse"/>
    <property type="evidence" value="ECO:0000318"/>
    <property type="project" value="GO_Central"/>
</dbReference>
<dbReference type="GO" id="GO:0098978">
    <property type="term" value="C:glutamatergic synapse"/>
    <property type="evidence" value="ECO:0000318"/>
    <property type="project" value="GO_Central"/>
</dbReference>
<dbReference type="GO" id="GO:0044306">
    <property type="term" value="C:neuron projection terminus"/>
    <property type="evidence" value="ECO:0007669"/>
    <property type="project" value="Ensembl"/>
</dbReference>
<dbReference type="GO" id="GO:0005634">
    <property type="term" value="C:nucleus"/>
    <property type="evidence" value="ECO:0000304"/>
    <property type="project" value="ProtInc"/>
</dbReference>
<dbReference type="GO" id="GO:0014069">
    <property type="term" value="C:postsynaptic density"/>
    <property type="evidence" value="ECO:0007669"/>
    <property type="project" value="Ensembl"/>
</dbReference>
<dbReference type="GO" id="GO:0048786">
    <property type="term" value="C:presynaptic active zone"/>
    <property type="evidence" value="ECO:0000250"/>
    <property type="project" value="ParkinsonsUK-UCL"/>
</dbReference>
<dbReference type="GO" id="GO:0098685">
    <property type="term" value="C:Schaffer collateral - CA1 synapse"/>
    <property type="evidence" value="ECO:0007669"/>
    <property type="project" value="Ensembl"/>
</dbReference>
<dbReference type="GO" id="GO:0008021">
    <property type="term" value="C:synaptic vesicle"/>
    <property type="evidence" value="ECO:0000250"/>
    <property type="project" value="UniProtKB"/>
</dbReference>
<dbReference type="GO" id="GO:0030672">
    <property type="term" value="C:synaptic vesicle membrane"/>
    <property type="evidence" value="ECO:0007669"/>
    <property type="project" value="UniProtKB-SubCell"/>
</dbReference>
<dbReference type="GO" id="GO:0004857">
    <property type="term" value="F:enzyme inhibitor activity"/>
    <property type="evidence" value="ECO:0000250"/>
    <property type="project" value="UniProtKB"/>
</dbReference>
<dbReference type="GO" id="GO:0098882">
    <property type="term" value="F:structural constituent of presynaptic active zone"/>
    <property type="evidence" value="ECO:0000318"/>
    <property type="project" value="GO_Central"/>
</dbReference>
<dbReference type="GO" id="GO:0008270">
    <property type="term" value="F:zinc ion binding"/>
    <property type="evidence" value="ECO:0007669"/>
    <property type="project" value="UniProtKB-KW"/>
</dbReference>
<dbReference type="GO" id="GO:0007268">
    <property type="term" value="P:chemical synaptic transmission"/>
    <property type="evidence" value="ECO:0000304"/>
    <property type="project" value="ProtInc"/>
</dbReference>
<dbReference type="GO" id="GO:0050804">
    <property type="term" value="P:modulation of chemical synaptic transmission"/>
    <property type="evidence" value="ECO:0000250"/>
    <property type="project" value="UniProtKB"/>
</dbReference>
<dbReference type="GO" id="GO:1904071">
    <property type="term" value="P:presynaptic active zone assembly"/>
    <property type="evidence" value="ECO:0000318"/>
    <property type="project" value="GO_Central"/>
</dbReference>
<dbReference type="GO" id="GO:0035418">
    <property type="term" value="P:protein localization to synapse"/>
    <property type="evidence" value="ECO:0000318"/>
    <property type="project" value="GO_Central"/>
</dbReference>
<dbReference type="GO" id="GO:0098693">
    <property type="term" value="P:regulation of synaptic vesicle cycle"/>
    <property type="evidence" value="ECO:0007669"/>
    <property type="project" value="Ensembl"/>
</dbReference>
<dbReference type="GO" id="GO:0097091">
    <property type="term" value="P:synaptic vesicle clustering"/>
    <property type="evidence" value="ECO:0007669"/>
    <property type="project" value="Ensembl"/>
</dbReference>
<dbReference type="CDD" id="cd15773">
    <property type="entry name" value="FYVE1_BSN"/>
    <property type="match status" value="1"/>
</dbReference>
<dbReference type="FunFam" id="3.30.40.10:FF:000326">
    <property type="entry name" value="Bassoon presynaptic cytomatrix protein"/>
    <property type="match status" value="1"/>
</dbReference>
<dbReference type="Gene3D" id="3.30.40.10">
    <property type="entry name" value="Zinc/RING finger domain, C3HC4 (zinc finger)"/>
    <property type="match status" value="2"/>
</dbReference>
<dbReference type="InterPro" id="IPR030627">
    <property type="entry name" value="Bsn_FYVE_dom"/>
</dbReference>
<dbReference type="InterPro" id="IPR052098">
    <property type="entry name" value="Presynaptic_Scaffold_Bsn/Pclo"/>
</dbReference>
<dbReference type="InterPro" id="IPR011011">
    <property type="entry name" value="Znf_FYVE_PHD"/>
</dbReference>
<dbReference type="InterPro" id="IPR008899">
    <property type="entry name" value="Znf_piccolo"/>
</dbReference>
<dbReference type="InterPro" id="IPR013083">
    <property type="entry name" value="Znf_RING/FYVE/PHD"/>
</dbReference>
<dbReference type="PANTHER" id="PTHR14113">
    <property type="entry name" value="PICCOLO/BASSOON"/>
    <property type="match status" value="1"/>
</dbReference>
<dbReference type="PANTHER" id="PTHR14113:SF1">
    <property type="entry name" value="PROTEIN BASSOON"/>
    <property type="match status" value="1"/>
</dbReference>
<dbReference type="Pfam" id="PF05715">
    <property type="entry name" value="zf-piccolo"/>
    <property type="match status" value="2"/>
</dbReference>
<dbReference type="SUPFAM" id="SSF57903">
    <property type="entry name" value="FYVE/PHD zinc finger"/>
    <property type="match status" value="2"/>
</dbReference>
<reference key="1">
    <citation type="journal article" date="1998" name="Genomics">
        <title>Cloning and mapping of ZNF231, a novel brain-specific gene encoding neuronal double zinc finger protein whose expression is enhanced in a neurodegenerative disorder, multiple system atrophy.</title>
        <authorList>
            <person name="Hashida H."/>
            <person name="Goto J."/>
            <person name="Zhao N."/>
            <person name="Takahashi N."/>
            <person name="Hirai M."/>
            <person name="Kanazawa I."/>
            <person name="Sakaki Y."/>
        </authorList>
    </citation>
    <scope>NUCLEOTIDE SEQUENCE [MRNA]</scope>
    <scope>TISSUE SPECIFICITY</scope>
    <scope>VARIANT THR-3863</scope>
</reference>
<reference key="2">
    <citation type="journal article" date="2006" name="Nature">
        <title>The DNA sequence, annotation and analysis of human chromosome 3.</title>
        <authorList>
            <person name="Muzny D.M."/>
            <person name="Scherer S.E."/>
            <person name="Kaul R."/>
            <person name="Wang J."/>
            <person name="Yu J."/>
            <person name="Sudbrak R."/>
            <person name="Buhay C.J."/>
            <person name="Chen R."/>
            <person name="Cree A."/>
            <person name="Ding Y."/>
            <person name="Dugan-Rocha S."/>
            <person name="Gill R."/>
            <person name="Gunaratne P."/>
            <person name="Harris R.A."/>
            <person name="Hawes A.C."/>
            <person name="Hernandez J."/>
            <person name="Hodgson A.V."/>
            <person name="Hume J."/>
            <person name="Jackson A."/>
            <person name="Khan Z.M."/>
            <person name="Kovar-Smith C."/>
            <person name="Lewis L.R."/>
            <person name="Lozado R.J."/>
            <person name="Metzker M.L."/>
            <person name="Milosavljevic A."/>
            <person name="Miner G.R."/>
            <person name="Morgan M.B."/>
            <person name="Nazareth L.V."/>
            <person name="Scott G."/>
            <person name="Sodergren E."/>
            <person name="Song X.-Z."/>
            <person name="Steffen D."/>
            <person name="Wei S."/>
            <person name="Wheeler D.A."/>
            <person name="Wright M.W."/>
            <person name="Worley K.C."/>
            <person name="Yuan Y."/>
            <person name="Zhang Z."/>
            <person name="Adams C.Q."/>
            <person name="Ansari-Lari M.A."/>
            <person name="Ayele M."/>
            <person name="Brown M.J."/>
            <person name="Chen G."/>
            <person name="Chen Z."/>
            <person name="Clendenning J."/>
            <person name="Clerc-Blankenburg K.P."/>
            <person name="Chen R."/>
            <person name="Chen Z."/>
            <person name="Davis C."/>
            <person name="Delgado O."/>
            <person name="Dinh H.H."/>
            <person name="Dong W."/>
            <person name="Draper H."/>
            <person name="Ernst S."/>
            <person name="Fu G."/>
            <person name="Gonzalez-Garay M.L."/>
            <person name="Garcia D.K."/>
            <person name="Gillett W."/>
            <person name="Gu J."/>
            <person name="Hao B."/>
            <person name="Haugen E."/>
            <person name="Havlak P."/>
            <person name="He X."/>
            <person name="Hennig S."/>
            <person name="Hu S."/>
            <person name="Huang W."/>
            <person name="Jackson L.R."/>
            <person name="Jacob L.S."/>
            <person name="Kelly S.H."/>
            <person name="Kube M."/>
            <person name="Levy R."/>
            <person name="Li Z."/>
            <person name="Liu B."/>
            <person name="Liu J."/>
            <person name="Liu W."/>
            <person name="Lu J."/>
            <person name="Maheshwari M."/>
            <person name="Nguyen B.-V."/>
            <person name="Okwuonu G.O."/>
            <person name="Palmeiri A."/>
            <person name="Pasternak S."/>
            <person name="Perez L.M."/>
            <person name="Phelps K.A."/>
            <person name="Plopper F.J."/>
            <person name="Qiang B."/>
            <person name="Raymond C."/>
            <person name="Rodriguez R."/>
            <person name="Saenphimmachak C."/>
            <person name="Santibanez J."/>
            <person name="Shen H."/>
            <person name="Shen Y."/>
            <person name="Subramanian S."/>
            <person name="Tabor P.E."/>
            <person name="Verduzco D."/>
            <person name="Waldron L."/>
            <person name="Wang J."/>
            <person name="Wang J."/>
            <person name="Wang Q."/>
            <person name="Williams G.A."/>
            <person name="Wong G.K.-S."/>
            <person name="Yao Z."/>
            <person name="Zhang J."/>
            <person name="Zhang X."/>
            <person name="Zhao G."/>
            <person name="Zhou J."/>
            <person name="Zhou Y."/>
            <person name="Nelson D."/>
            <person name="Lehrach H."/>
            <person name="Reinhardt R."/>
            <person name="Naylor S.L."/>
            <person name="Yang H."/>
            <person name="Olson M."/>
            <person name="Weinstock G."/>
            <person name="Gibbs R.A."/>
        </authorList>
    </citation>
    <scope>NUCLEOTIDE SEQUENCE [LARGE SCALE GENOMIC DNA]</scope>
</reference>
<reference key="3">
    <citation type="journal article" date="1999" name="Genomics">
        <title>The presynaptic cytomatrix protein Bassoon: sequence and chromosomal localization of the human BSN gene.</title>
        <authorList>
            <person name="Winter C."/>
            <person name="tom Dieck S."/>
            <person name="Boeckers T."/>
            <person name="Bockmann J."/>
            <person name="Kaempf U."/>
            <person name="Sanmarti-Vila L."/>
            <person name="Langnaese K."/>
            <person name="Altrock W."/>
            <person name="Stumm M."/>
            <person name="Soyke A."/>
            <person name="Wieacker P."/>
            <person name="Garner C.C."/>
            <person name="Gundelfinger E.D."/>
        </authorList>
    </citation>
    <scope>NUCLEOTIDE SEQUENCE [GENOMIC DNA] OF 77-3926</scope>
    <scope>VARIANT THR-3863</scope>
</reference>
<reference key="4">
    <citation type="journal article" date="1997" name="DNA Res.">
        <title>Prediction of the coding sequences of unidentified human genes. VIII. 78 new cDNA clones from brain which code for large proteins in vitro.</title>
        <authorList>
            <person name="Ishikawa K."/>
            <person name="Nagase T."/>
            <person name="Nakajima D."/>
            <person name="Seki N."/>
            <person name="Ohira M."/>
            <person name="Miyajima N."/>
            <person name="Tanaka A."/>
            <person name="Kotani H."/>
            <person name="Nomura N."/>
            <person name="Ohara O."/>
        </authorList>
    </citation>
    <scope>NUCLEOTIDE SEQUENCE [LARGE SCALE MRNA] OF 2357-3926</scope>
    <scope>VARIANT THR-3863</scope>
    <source>
        <tissue>Brain</tissue>
    </source>
</reference>
<reference key="5">
    <citation type="journal article" date="2003" name="Mol. Cell. Neurosci.">
        <title>Functional regions of the presynaptic cytomatrix protein bassoon: significance for synaptic targeting and cytomatrix anchoring.</title>
        <authorList>
            <person name="Dresbach T."/>
            <person name="Hempelmann A."/>
            <person name="Spilker C."/>
            <person name="tom Dieck S."/>
            <person name="Altrock W.D."/>
            <person name="Zuschratter W."/>
            <person name="Garner C.C."/>
            <person name="Gundelfinger E.D."/>
        </authorList>
    </citation>
    <scope>FUNCTION</scope>
</reference>
<reference key="6">
    <citation type="journal article" date="2009" name="J. Cell Biol.">
        <title>Dynein light chain regulates axonal trafficking and synaptic levels of Bassoon.</title>
        <authorList>
            <person name="Fejtova A."/>
            <person name="Davydova D."/>
            <person name="Bischof F."/>
            <person name="Lazarevic V."/>
            <person name="Altrock W.D."/>
            <person name="Romorini S."/>
            <person name="Schoene C."/>
            <person name="Zuschratter W."/>
            <person name="Kreutz M.R."/>
            <person name="Garner C.C."/>
            <person name="Ziv N.E."/>
            <person name="Gundelfinger E.D."/>
        </authorList>
    </citation>
    <scope>FUNCTION</scope>
    <scope>INTERACTION WITH DYNLL1 AND DYNLL2</scope>
</reference>
<reference key="7">
    <citation type="journal article" date="2013" name="J. Proteome Res.">
        <title>Toward a comprehensive characterization of a human cancer cell phosphoproteome.</title>
        <authorList>
            <person name="Zhou H."/>
            <person name="Di Palma S."/>
            <person name="Preisinger C."/>
            <person name="Peng M."/>
            <person name="Polat A.N."/>
            <person name="Heck A.J."/>
            <person name="Mohammed S."/>
        </authorList>
    </citation>
    <scope>IDENTIFICATION BY MASS SPECTROMETRY [LARGE SCALE ANALYSIS]</scope>
    <source>
        <tissue>Erythroleukemia</tissue>
    </source>
</reference>
<keyword id="KW-0966">Cell projection</keyword>
<keyword id="KW-0175">Coiled coil</keyword>
<keyword id="KW-0963">Cytoplasm</keyword>
<keyword id="KW-0968">Cytoplasmic vesicle</keyword>
<keyword id="KW-0206">Cytoskeleton</keyword>
<keyword id="KW-0325">Glycoprotein</keyword>
<keyword id="KW-0449">Lipoprotein</keyword>
<keyword id="KW-0472">Membrane</keyword>
<keyword id="KW-0479">Metal-binding</keyword>
<keyword id="KW-0488">Methylation</keyword>
<keyword id="KW-0519">Myristate</keyword>
<keyword id="KW-0597">Phosphoprotein</keyword>
<keyword id="KW-1267">Proteomics identification</keyword>
<keyword id="KW-1185">Reference proteome</keyword>
<keyword id="KW-0677">Repeat</keyword>
<keyword id="KW-0770">Synapse</keyword>
<keyword id="KW-0862">Zinc</keyword>
<keyword id="KW-0863">Zinc-finger</keyword>
<sequence length="3926" mass="416469">MGNEVSLEGGAGDGPLPPGGAGPGPGPGPGPGAGKPPSAPAGGGQLPAAGAARSTAVPPVPGPGPGPGPGPGPGSTSRRLDPKEPLGNQRAASPTPKQASATTPGHESPRETRAQGPAGQEADGPRRTLQVDSRTQRSGRSPSVSPDRGSTPTSPYSVPQIAPLPSSTLCPICKTSDLTSTPSQPNFNTCTQCHNKVCNQCGFNPNPHLTQVKEWLCLNCQMQRALGMDMTTAPRSKSQQQLHSPALSPAHSPAKQPLGKPDQERSRGPGGPQPGSRQAETARATSVPGPAQAAAPPEVGRVSPQPPQPTKPSTAEPRPPAGEAPAKSATAVPAGLGATEQTQEGLTGKLFGLGASLLTQASTLMSVQPEADTQGQPAPSKGTPKIVFNDASKEAGPKPLGSGPGPGPAPGAKTEPGARMGPGSGPGALPKTGGTTSPKHGRAEHQAASKAAAKPKTMPKERAICPLCQAELNVGSKSPANYNTCTTCRLQVCNLCGFNPTPHLVEKTEWLCLNCQTKRLLEGSLGEPTPLPPPTSQQPPVGAPHRASGTSPLKQKGPQGLGQPSGPLPAKASPLSTKASPLPSKASPQAKPLRASEPSKTPSSVQEKKTRVPTKAEPMPKPPPETTPTPATPKVKSGVRRAEPATPVVKAVPEAPKGGEAEDLVGKPYSQDASRSPQSLSDTGYSSDGISSSQSEITGVVQQEVEQLDSAGVTGPHPPSPSEIHKVGSSMRPLLQAQGLAPSERSKPLSSGTGEEQKQRPHSLSITPEAFDSDEELEDILEEDEDSAEWRRRREQQDTAESSDDFGSQLRHDYVEDSSEGGLSPLPPQPPARAAELTDEDFMRRQILEMSAEEDNLEEDDTATSGRGLAKHGTQKGGPRPRPEPSQEPAALPKRRLPHNATTGYEELLPEGGSAEATDGSGTLQGGLRRFKTIELNSTGSYGHELDLGQGPDPSLDREPELEMESLTGSPEDRSRGEHSSTLPASTPSYTSGTSPTSLSSLEEDSDSSPSRRQRLEEAKQQRKARHRSHGPLLPTIEDSSEEEELREEEELLREQEKMREVEQQRIRSTARKTRRDKEELRAQRRRERSKTPPSNLSPIEDASPTEELRQAAEMEELHRSSCSEYSPSPSLDSEAEALDGGPSRLYKSGSEYNLPTFMSLYSPTETPSGSSTTPSSGRPLKSAEEAYEEMMRKAELLQRQQGQAAGARGPHGGPSQPTGPRGLGSFEYQDTTDREYGQAAQPAAEGTPASLGAAVYEEILQTSQSIVRMRQASSRDLAFAEDKKKEKQFLNAESAYMDPMKQNGGPLTPGTSPTQLAAPVSFSTPTSSDSSGGRVIPDVRVTQHFAKETQDPLKLHSSPASPSSASKEIGMPFSQGPGTPATTAVAPCPAGLPRGYMTPASPAGSERSPSPSSTAHSYGHSPTTANYGSQTEDLPQAPSGLAAAGRAAREKPLSASDGEGGTPQPSRAYSYFASSSPPLSPSSPSESPTFSPGKMGPRATAEFSTQTPSPAPASDMPRSPGAPTPSPMVAQGTQTPHRPSTPRLVWQESSQEAPFMVITLASDASSQTRMVHASASTSPLCSPTETQPTTHGYSQTTPPSVSQLPPEPPGPPGFPRVPSAGADGPLALYGWGALPAENISLCRISSVPGTSRVEPGPRTPGTAVVDLRTAVKPTPIILTDQGMDLTSLAVEARKYGLALDPIPGRQSTAVQPLVINLNAQEHTFLATATTVSITMASSVFMAQQKQPVVYGDPYQSRLDFGQGGGSPVCLAQVKQVEQAVQTAPYRSGPRGRPREAKFARYNLPNQVAPLARRDVLITQMGTAQSIGLKPGPVPEPGAEPHRATPAELRSHALPGARKPHTVVVQMGEGTAGTVTTLLPEEPAGALDLTGMRPESQLACCDMVYKLPFGSSCTGTFHPAPSVPEKSMADAAPPGQSSSPFYGPRDPEPPEPPTYRAQGVVGPGPHEEQRPYPQGLPGRLYSSMSDTNLAEAGLNYHAQRIGQLFQGPGRDSAMDLSSLKHSYSLGFADGRYLGQGLQYGSVTDLRHPTDLLAHPLPMRRYSSVSNIYSDHRYGPRGDAVGFQEASLAQYSATTAREISRMCAALNSMDQYGGRHGSGGGGPDLVQYQPQHGPGLSAPQSLVPLRPGLLGNPTFPEGHPSPGNLAQYGPAAGQGTAVRQLLPSTATVRAADGMIYSTINTPIAATLPITTQPASVLRPMVRGGMYRPYASGGITAVPLTSLTRVPMIAPRVPLGPTGLYRYPAPSRFPIASSVPPAEGPVYLGKPAAAKAPGAGGPSRPEMPVGAAREEPLPTTTPAAIKEAAGAPAPAPLAGQKPPADAAPGGGSGALSRPGFEKEEASQEERQRKQQEQLLQLERERVELEKLRQLRLQEELERERVELQRHREEEQLLVQRELQELQTIKHHVLQQQQEERQAQFALQREQLAQQRLQLEQIQQLQQQLQQQLEEQKQRQKAPFPAACEAPGRGPPLAAAELAQNGQYWPPLTHAAFIAMAGPEGLGQPREPVLHRGLPSSASDMSLQTEEQWEASRSGIKKRHSMPRLRDACELESGTEPCVVRRIADSSVQTDDEDGESRYLLSRRRRARRSADCSVQTDDEDSAEWEQPVRRRRSRLPRHSDSGSDSKHDATASSSSAAATVRAMSSVGIQTISDCSVQTEPDQLPRVSPAIHITAATDPKVEIVRYISAPEKTGRGESLACQTEPDGQAQGVAGPQLVGPTAISPYLPGIQIVTPGPLGRFEKKKPDPLEIGYQAHLPPESLSQLVSRQPPKSPQVLYSPVSPLSPHRLLDTSFASSERLNKAHVSPQKHFTADSALRQQTLPRPMKTLQRSLSDPKPLSPTAEESAKERFSLYQHQGGLGSQVSALPPNSLVRKVKRTLPSPPPEEAHLPLAGQASPQLYAASLLQRGLTGPTTVPATKASLLRELDRDLRLVEHESTKLRKKQAELDEEEKEIDAKLKYLELGITQRKESLAKDRGGRDYPPLRGLGEHRDYLSDSELNQLRLQGCTTPAGQFVDFPATAAAPATPSGPTAFQQPRFQPPAPQYSAGSGGPTQNGFPAHQAPTYPGPSTYPAPAFPPGASYPAEPGLPNQQAFRPTGHYAGQTPMPTTQSTLFPVPADSRAPLQKPRQTSLADLEQKVPTNYEVIASPVVPMSSAPSETSYSGPAVSSGYEQGKVPEVPRAGDRGSVSQSPAPTYPSDSHYTSLEQNVPRNYVMIDDISELTKDSTSTAPDSQRLEPLGPGSSGRPGKEPGEPGVLDGPTLPCCYARGEEESEEDSYDPRGKGGHLRSMESNGRPASTHYYGDSDYRHGARVEKYGPGPMGPKHPSKSLAPAAISSKRSKHRKQGMEQKISKFSPIEEAKDVESDLASYPPPAVSSSLVSRGRKFQDEITYGLKKNVYEQQKYYGMSSRDAVEDDRIYGGSSRSRAPSAYSGEKLSSHDFSGWGKGYEREREAVERLQKAGPKPSSLSMAHSRVRPPMRSQASEEESPVSPLGRPRPAGGPLPPGGDTCPQFCSSHSMPDVQEHVKDGPRAHAYKREEGYILDDSHCVVSDSEAYHLGQEETDWFDKPRDARSDRFRHHGGHAVSSSSQKRGPARHSYHDYDEPPEEGLWPHDEGGPGRHASAKEHRHGDHGRHSGRHTGEEPGRRAAKPHARDLGRHEARPHSQPSSAPAMPKKGQPGYPSSAEYSQPSRASSAYHHASDSKKGSRQAHSGPAALQSKAEPQAQPQLQGRQAAPGPQQSQSPSSRQIPSGAASRQPQTQQQQQGLGLQPPQQALTQARLQQQSQPTTRGSAPAASQPAGKPQPGPSTATGPQPAGPPRAEQTNGSKGTAKAPQQGRAPQAQPAPGPGPAGVKAGARPGGTPGAPAGQPGADGESVFSKILPGGAAEQAGKLTEAVSAFGKKFSSFW</sequence>
<feature type="initiator methionine" description="Removed" evidence="4">
    <location>
        <position position="1"/>
    </location>
</feature>
<feature type="chain" id="PRO_0000065002" description="Protein bassoon">
    <location>
        <begin position="2"/>
        <end position="3926"/>
    </location>
</feature>
<feature type="repeat" description="1">
    <location>
        <begin position="571"/>
        <end position="577"/>
    </location>
</feature>
<feature type="repeat" description="2">
    <location>
        <begin position="578"/>
        <end position="584"/>
    </location>
</feature>
<feature type="repeat" description="3">
    <location>
        <begin position="585"/>
        <end position="591"/>
    </location>
</feature>
<feature type="zinc finger region" description="C4-type" evidence="5">
    <location>
        <begin position="170"/>
        <end position="193"/>
    </location>
</feature>
<feature type="zinc finger region" description="C4-type" evidence="5">
    <location>
        <begin position="198"/>
        <end position="220"/>
    </location>
</feature>
<feature type="zinc finger region" description="C4-type" evidence="5">
    <location>
        <begin position="465"/>
        <end position="488"/>
    </location>
</feature>
<feature type="zinc finger region" description="C4-type" evidence="5">
    <location>
        <begin position="493"/>
        <end position="515"/>
    </location>
</feature>
<feature type="region of interest" description="Disordered" evidence="6">
    <location>
        <begin position="1"/>
        <end position="161"/>
    </location>
</feature>
<feature type="region of interest" description="5 X 2 AA tandem repeats of P-G">
    <location>
        <begin position="23"/>
        <end position="32"/>
    </location>
</feature>
<feature type="region of interest" description="7 X 2 AA tandem repeats of P-G">
    <location>
        <begin position="61"/>
        <end position="74"/>
    </location>
</feature>
<feature type="region of interest" description="Disordered" evidence="6">
    <location>
        <begin position="231"/>
        <end position="343"/>
    </location>
</feature>
<feature type="region of interest" description="Disordered" evidence="6">
    <location>
        <begin position="366"/>
        <end position="459"/>
    </location>
</feature>
<feature type="region of interest" description="Disordered" evidence="6">
    <location>
        <begin position="524"/>
        <end position="927"/>
    </location>
</feature>
<feature type="region of interest" description="3 X 7 AA tandem repeats of K-A-S-P-[LQ]-[APS]-[KST]">
    <location>
        <begin position="571"/>
        <end position="591"/>
    </location>
</feature>
<feature type="region of interest" description="Disordered" evidence="6">
    <location>
        <begin position="940"/>
        <end position="1248"/>
    </location>
</feature>
<feature type="region of interest" description="Disordered" evidence="6">
    <location>
        <begin position="1298"/>
        <end position="1547"/>
    </location>
</feature>
<feature type="region of interest" description="Disordered" evidence="6">
    <location>
        <begin position="1570"/>
        <end position="1620"/>
    </location>
</feature>
<feature type="region of interest" description="Disordered" evidence="6">
    <location>
        <begin position="1924"/>
        <end position="1978"/>
    </location>
</feature>
<feature type="region of interest" description="Disordered" evidence="6">
    <location>
        <begin position="2287"/>
        <end position="2309"/>
    </location>
</feature>
<feature type="region of interest" description="Disordered" evidence="6">
    <location>
        <begin position="2324"/>
        <end position="2370"/>
    </location>
</feature>
<feature type="region of interest" description="Disordered" evidence="6">
    <location>
        <begin position="2532"/>
        <end position="2568"/>
    </location>
</feature>
<feature type="region of interest" description="Disordered" evidence="6">
    <location>
        <begin position="2601"/>
        <end position="2655"/>
    </location>
</feature>
<feature type="region of interest" description="Interaction with DAO" evidence="4">
    <location>
        <begin position="2721"/>
        <end position="3268"/>
    </location>
</feature>
<feature type="region of interest" description="Disordered" evidence="6">
    <location>
        <begin position="2845"/>
        <end position="2865"/>
    </location>
</feature>
<feature type="region of interest" description="Disordered" evidence="6">
    <location>
        <begin position="3039"/>
        <end position="3375"/>
    </location>
</feature>
<feature type="region of interest" description="Disordered" evidence="6">
    <location>
        <begin position="3424"/>
        <end position="3551"/>
    </location>
</feature>
<feature type="region of interest" description="Disordered" evidence="6">
    <location>
        <begin position="3572"/>
        <end position="3897"/>
    </location>
</feature>
<feature type="coiled-coil region" evidence="5">
    <location>
        <begin position="1037"/>
        <end position="1092"/>
    </location>
</feature>
<feature type="coiled-coil region" evidence="5">
    <location>
        <begin position="1181"/>
        <end position="1208"/>
    </location>
</feature>
<feature type="coiled-coil region" evidence="5">
    <location>
        <begin position="1276"/>
        <end position="1294"/>
    </location>
</feature>
<feature type="coiled-coil region" evidence="5">
    <location>
        <begin position="2351"/>
        <end position="2476"/>
    </location>
</feature>
<feature type="coiled-coil region" evidence="5">
    <location>
        <begin position="2939"/>
        <end position="2981"/>
    </location>
</feature>
<feature type="compositionally biased region" description="Pro residues" evidence="6">
    <location>
        <begin position="15"/>
        <end position="30"/>
    </location>
</feature>
<feature type="compositionally biased region" description="Pro residues" evidence="6">
    <location>
        <begin position="58"/>
        <end position="72"/>
    </location>
</feature>
<feature type="compositionally biased region" description="Polar residues" evidence="6">
    <location>
        <begin position="90"/>
        <end position="105"/>
    </location>
</feature>
<feature type="compositionally biased region" description="Polar residues" evidence="6">
    <location>
        <begin position="130"/>
        <end position="157"/>
    </location>
</feature>
<feature type="compositionally biased region" description="Polar residues" evidence="6">
    <location>
        <begin position="233"/>
        <end position="243"/>
    </location>
</feature>
<feature type="compositionally biased region" description="Polar residues" evidence="6">
    <location>
        <begin position="366"/>
        <end position="377"/>
    </location>
</feature>
<feature type="compositionally biased region" description="Low complexity" evidence="6">
    <location>
        <begin position="552"/>
        <end position="569"/>
    </location>
</feature>
<feature type="compositionally biased region" description="Pro residues" evidence="6">
    <location>
        <begin position="619"/>
        <end position="631"/>
    </location>
</feature>
<feature type="compositionally biased region" description="Polar residues" evidence="6">
    <location>
        <begin position="671"/>
        <end position="680"/>
    </location>
</feature>
<feature type="compositionally biased region" description="Low complexity" evidence="6">
    <location>
        <begin position="681"/>
        <end position="698"/>
    </location>
</feature>
<feature type="compositionally biased region" description="Acidic residues" evidence="6">
    <location>
        <begin position="771"/>
        <end position="787"/>
    </location>
</feature>
<feature type="compositionally biased region" description="Basic and acidic residues" evidence="6">
    <location>
        <begin position="788"/>
        <end position="797"/>
    </location>
</feature>
<feature type="compositionally biased region" description="Acidic residues" evidence="6">
    <location>
        <begin position="851"/>
        <end position="862"/>
    </location>
</feature>
<feature type="compositionally biased region" description="Low complexity" evidence="6">
    <location>
        <begin position="984"/>
        <end position="1001"/>
    </location>
</feature>
<feature type="compositionally biased region" description="Acidic residues" evidence="6">
    <location>
        <begin position="1039"/>
        <end position="1052"/>
    </location>
</feature>
<feature type="compositionally biased region" description="Basic and acidic residues" evidence="6">
    <location>
        <begin position="1053"/>
        <end position="1066"/>
    </location>
</feature>
<feature type="compositionally biased region" description="Basic and acidic residues" evidence="6">
    <location>
        <begin position="1107"/>
        <end position="1122"/>
    </location>
</feature>
<feature type="compositionally biased region" description="Low complexity" evidence="6">
    <location>
        <begin position="1123"/>
        <end position="1133"/>
    </location>
</feature>
<feature type="compositionally biased region" description="Low complexity" evidence="6">
    <location>
        <begin position="1163"/>
        <end position="1180"/>
    </location>
</feature>
<feature type="compositionally biased region" description="Basic and acidic residues" evidence="6">
    <location>
        <begin position="1182"/>
        <end position="1197"/>
    </location>
</feature>
<feature type="compositionally biased region" description="Low complexity" evidence="6">
    <location>
        <begin position="1199"/>
        <end position="1209"/>
    </location>
</feature>
<feature type="compositionally biased region" description="Low complexity" evidence="6">
    <location>
        <begin position="1322"/>
        <end position="1332"/>
    </location>
</feature>
<feature type="compositionally biased region" description="Basic and acidic residues" evidence="6">
    <location>
        <begin position="1346"/>
        <end position="1355"/>
    </location>
</feature>
<feature type="compositionally biased region" description="Low complexity" evidence="6">
    <location>
        <begin position="1358"/>
        <end position="1367"/>
    </location>
</feature>
<feature type="compositionally biased region" description="Low complexity" evidence="6">
    <location>
        <begin position="1377"/>
        <end position="1392"/>
    </location>
</feature>
<feature type="compositionally biased region" description="Polar residues" evidence="6">
    <location>
        <begin position="1408"/>
        <end position="1434"/>
    </location>
</feature>
<feature type="compositionally biased region" description="Low complexity" evidence="6">
    <location>
        <begin position="1466"/>
        <end position="1493"/>
    </location>
</feature>
<feature type="compositionally biased region" description="Polar residues" evidence="6">
    <location>
        <begin position="1570"/>
        <end position="1598"/>
    </location>
</feature>
<feature type="compositionally biased region" description="Pro residues" evidence="6">
    <location>
        <begin position="1606"/>
        <end position="1616"/>
    </location>
</feature>
<feature type="compositionally biased region" description="Low complexity" evidence="6">
    <location>
        <begin position="2324"/>
        <end position="2341"/>
    </location>
</feature>
<feature type="compositionally biased region" description="Basic and acidic residues" evidence="6">
    <location>
        <begin position="2353"/>
        <end position="2370"/>
    </location>
</feature>
<feature type="compositionally biased region" description="Polar residues" evidence="6">
    <location>
        <begin position="2533"/>
        <end position="2543"/>
    </location>
</feature>
<feature type="compositionally biased region" description="Basic and acidic residues" evidence="6">
    <location>
        <begin position="2635"/>
        <end position="2647"/>
    </location>
</feature>
<feature type="compositionally biased region" description="Low complexity" evidence="6">
    <location>
        <begin position="3039"/>
        <end position="3055"/>
    </location>
</feature>
<feature type="compositionally biased region" description="Pro residues" evidence="6">
    <location>
        <begin position="3083"/>
        <end position="3095"/>
    </location>
</feature>
<feature type="compositionally biased region" description="Low complexity" evidence="6">
    <location>
        <begin position="3165"/>
        <end position="3176"/>
    </location>
</feature>
<feature type="compositionally biased region" description="Polar residues" evidence="6">
    <location>
        <begin position="3205"/>
        <end position="3228"/>
    </location>
</feature>
<feature type="compositionally biased region" description="Basic and acidic residues" evidence="6">
    <location>
        <begin position="3321"/>
        <end position="3333"/>
    </location>
</feature>
<feature type="compositionally biased region" description="Basic and acidic residues" evidence="6">
    <location>
        <begin position="3363"/>
        <end position="3375"/>
    </location>
</feature>
<feature type="compositionally biased region" description="Basic and acidic residues" evidence="6">
    <location>
        <begin position="3465"/>
        <end position="3477"/>
    </location>
</feature>
<feature type="compositionally biased region" description="Basic and acidic residues" evidence="6">
    <location>
        <begin position="3540"/>
        <end position="3551"/>
    </location>
</feature>
<feature type="compositionally biased region" description="Basic and acidic residues" evidence="6">
    <location>
        <begin position="3583"/>
        <end position="3593"/>
    </location>
</feature>
<feature type="compositionally biased region" description="Basic and acidic residues" evidence="6">
    <location>
        <begin position="3628"/>
        <end position="3647"/>
    </location>
</feature>
<feature type="compositionally biased region" description="Basic and acidic residues" evidence="6">
    <location>
        <begin position="3657"/>
        <end position="3681"/>
    </location>
</feature>
<feature type="compositionally biased region" description="Polar residues" evidence="6">
    <location>
        <begin position="3703"/>
        <end position="3712"/>
    </location>
</feature>
<feature type="compositionally biased region" description="Low complexity" evidence="6">
    <location>
        <begin position="3741"/>
        <end position="3807"/>
    </location>
</feature>
<feature type="compositionally biased region" description="Low complexity" evidence="6">
    <location>
        <begin position="3849"/>
        <end position="3860"/>
    </location>
</feature>
<feature type="compositionally biased region" description="Low complexity" evidence="6">
    <location>
        <begin position="3882"/>
        <end position="3892"/>
    </location>
</feature>
<feature type="modified residue" description="Phosphoserine" evidence="3">
    <location>
        <position position="145"/>
    </location>
</feature>
<feature type="modified residue" description="Omega-N-methylarginine" evidence="3">
    <location>
        <position position="148"/>
    </location>
</feature>
<feature type="modified residue" description="Phosphoserine" evidence="3">
    <location>
        <position position="244"/>
    </location>
</feature>
<feature type="modified residue" description="Phosphoserine" evidence="3">
    <location>
        <position position="248"/>
    </location>
</feature>
<feature type="modified residue" description="Omega-N-methylarginine" evidence="3">
    <location>
        <position position="867"/>
    </location>
</feature>
<feature type="modified residue" description="Phosphoserine" evidence="3">
    <location>
        <position position="970"/>
    </location>
</feature>
<feature type="modified residue" description="Phosphoserine" evidence="3">
    <location>
        <position position="1040"/>
    </location>
</feature>
<feature type="modified residue" description="Phosphoserine" evidence="3">
    <location>
        <position position="1041"/>
    </location>
</feature>
<feature type="modified residue" description="Phosphoserine" evidence="3">
    <location>
        <position position="1090"/>
    </location>
</feature>
<feature type="modified residue" description="Phosphothreonine" evidence="3">
    <location>
        <position position="1092"/>
    </location>
</feature>
<feature type="modified residue" description="Phosphoserine" evidence="3">
    <location>
        <position position="1098"/>
    </location>
</feature>
<feature type="modified residue" description="Phosphoserine" evidence="3">
    <location>
        <position position="1104"/>
    </location>
</feature>
<feature type="modified residue" description="Phosphoserine" evidence="3">
    <location>
        <position position="1226"/>
    </location>
</feature>
<feature type="modified residue" description="Phosphoserine" evidence="3">
    <location>
        <position position="1477"/>
    </location>
</feature>
<feature type="modified residue" description="Phosphoserine" evidence="3">
    <location>
        <position position="1486"/>
    </location>
</feature>
<feature type="modified residue" description="Phosphoserine" evidence="3">
    <location>
        <position position="1488"/>
    </location>
</feature>
<feature type="modified residue" description="Omega-N-methylarginine" evidence="3">
    <location>
        <position position="1787"/>
    </location>
</feature>
<feature type="modified residue" description="Omega-N-methylarginine" evidence="3">
    <location>
        <position position="1791"/>
    </location>
</feature>
<feature type="modified residue" description="Asymmetric dimethylarginine; alternate" evidence="3">
    <location>
        <position position="1801"/>
    </location>
</feature>
<feature type="modified residue" description="Omega-N-methylarginine; alternate" evidence="3">
    <location>
        <position position="1801"/>
    </location>
</feature>
<feature type="modified residue" description="Omega-N-methylarginine" evidence="3">
    <location>
        <position position="1813"/>
    </location>
</feature>
<feature type="modified residue" description="Phosphoserine" evidence="3">
    <location>
        <position position="1985"/>
    </location>
</feature>
<feature type="modified residue" description="Phosphoserine" evidence="3">
    <location>
        <position position="2041"/>
    </location>
</feature>
<feature type="modified residue" description="Omega-N-methylarginine" evidence="3">
    <location>
        <position position="2046"/>
    </location>
</feature>
<feature type="modified residue" description="Omega-N-methylarginine" evidence="3">
    <location>
        <position position="2076"/>
    </location>
</feature>
<feature type="modified residue" description="Asymmetric dimethylarginine" evidence="3">
    <location>
        <position position="2250"/>
    </location>
</feature>
<feature type="modified residue" description="Asymmetric dimethylarginine" evidence="3">
    <location>
        <position position="2260"/>
    </location>
</feature>
<feature type="modified residue" description="Asymmetric dimethylarginine" evidence="3">
    <location>
        <position position="2266"/>
    </location>
</feature>
<feature type="modified residue" description="Phosphoserine" evidence="3">
    <location>
        <position position="2570"/>
    </location>
</feature>
<feature type="modified residue" description="Phosphothreonine" evidence="3">
    <location>
        <position position="2587"/>
    </location>
</feature>
<feature type="modified residue" description="Phosphothreonine" evidence="3">
    <location>
        <position position="2614"/>
    </location>
</feature>
<feature type="modified residue" description="Phosphoserine" evidence="3">
    <location>
        <position position="2802"/>
    </location>
</feature>
<feature type="modified residue" description="Phosphoserine" evidence="3">
    <location>
        <position position="2851"/>
    </location>
</feature>
<feature type="modified residue" description="Phosphoserine" evidence="3">
    <location>
        <position position="2857"/>
    </location>
</feature>
<feature type="modified residue" description="Phosphoserine" evidence="3">
    <location>
        <position position="3013"/>
    </location>
</feature>
<feature type="modified residue" description="Phosphoserine" evidence="3">
    <location>
        <position position="3291"/>
    </location>
</feature>
<feature type="modified residue" description="Phosphoserine" evidence="3">
    <location>
        <position position="3373"/>
    </location>
</feature>
<feature type="modified residue" description="Omega-N-methylarginine" evidence="3">
    <location>
        <position position="3492"/>
    </location>
</feature>
<feature type="modified residue" description="Omega-N-methylarginine" evidence="3">
    <location>
        <position position="3808"/>
    </location>
</feature>
<feature type="lipid moiety-binding region" description="N-myristoyl glycine" evidence="1">
    <location>
        <position position="2"/>
    </location>
</feature>
<feature type="glycosylation site" description="O-linked (GlcNAc) threonine" evidence="1">
    <location>
        <position position="1343"/>
    </location>
</feature>
<feature type="glycosylation site" description="O-linked (GlcNAc) threonine" evidence="1">
    <location>
        <position position="1384"/>
    </location>
</feature>
<feature type="glycosylation site" description="O-linked (GlcNAc) threonine" evidence="1">
    <location>
        <position position="2314"/>
    </location>
</feature>
<feature type="glycosylation site" description="O-linked (GlcNAc) threonine" evidence="1">
    <location>
        <position position="2691"/>
    </location>
</feature>
<feature type="glycosylation site" description="O-linked (GlcNAc) threonine" evidence="1">
    <location>
        <position position="2936"/>
    </location>
</feature>
<feature type="sequence variant" id="VAR_055105" description="In dbSNP:rs34762726.">
    <original>A</original>
    <variation>T</variation>
    <location>
        <position position="741"/>
    </location>
</feature>
<feature type="sequence variant" id="VAR_055106" description="In dbSNP:rs35762866.">
    <original>G</original>
    <variation>D</variation>
    <location>
        <position position="1213"/>
    </location>
</feature>
<feature type="sequence variant" id="VAR_055107" description="In dbSNP:rs2005557." evidence="7 10 11">
    <original>A</original>
    <variation>T</variation>
    <location>
        <position position="3863"/>
    </location>
</feature>
<feature type="sequence conflict" description="In Ref. 1; AAC83555." evidence="13" ref="1">
    <original>F</original>
    <variation>L</variation>
    <location>
        <position position="3925"/>
    </location>
</feature>
<name>BSN_HUMAN</name>
<comment type="function">
    <text evidence="2 4 8 9">Scaffold protein of the presynaptic cytomatrix at the active zone (CAZ) which is the place in the synapse where neurotransmitter is released (PubMed:12812759). After synthesis, participates in the formation of Golgi-derived membranous organelles termed Piccolo-Bassoon transport vesicles (PTVs) that are transported along axons to sites of nascent synaptic contacts (PubMed:19380881). At the presynaptic active zone, regulates the spatial organization of synaptic vesicle cluster, the protein complexes that execute membrane fusion and compensatory endocytosis (By similarity). Also functions in processes other than assembly such as the regulation of specific presynaptic protein ubiquitination by interacting with SIAH1 or the regulation of presynaptic autophagy by associating with ATG5 (By similarity). Also mediates synapse to nucleus communication leading to reconfiguration of gene expression by associating with the transcriptional corepressor CTBP1 and by subsequently reducing the size of its pool available for nuclear import (By similarity). Inhibits the activity of the proportion of DAO enzyme that localizes to the presynaptic active zone, which may modulate synaptic transmission (By similarity).</text>
</comment>
<comment type="subunit">
    <text evidence="3 4 9">Interacts with PCLO, ERC2/CAST1, RIMS1 and UNC13A (By similarity). Interacts with TPRG1L (By similarity). Interacts with DYNLL1 and DYNLL2; these interactions potentially link PTVs to dynein and myosin V motor complexes (PubMed:19380881). Interacts with ATG5; this interaction is important for the regulation of presynaptic autophagy (By similarity). Interacts (via C-terminus) with TRIO (via N-terminus) (By similarity). Interacts with CTBP1 (By similarity). Interacts with SIAH1; this interaction negatively regulates SIAH1 E3 ligase activity (By similarity). Interacts (via coiled region) with DAO; the interaction is direct (By similarity).</text>
</comment>
<comment type="subcellular location">
    <subcellularLocation>
        <location evidence="4">Cytoplasm</location>
    </subcellularLocation>
    <subcellularLocation>
        <location evidence="4">Presynaptic active zone</location>
    </subcellularLocation>
    <subcellularLocation>
        <location evidence="4">Cytoplasm</location>
        <location evidence="4">Cytoskeleton</location>
    </subcellularLocation>
    <subcellularLocation>
        <location evidence="4">Cytoplasmic vesicle</location>
        <location evidence="4">Secretory vesicle</location>
        <location evidence="4">Synaptic vesicle membrane</location>
        <topology evidence="4">Peripheral membrane protein</topology>
    </subcellularLocation>
    <text evidence="4">In retina, is localized in the outer plexiform layer at ribbon synapses formed by rods and cones but was absent from basal synaptic contacts formed by cones. In the retinal inner plexiform layer localized to conventional inhibitory GABAergic synapses, made by amacrine cells, but absent from the bipolar cell ribbon synapses.</text>
</comment>
<comment type="tissue specificity">
    <text evidence="11">Exclusively expressed in brain.</text>
</comment>
<comment type="PTM">
    <text evidence="1">Myristoylated. The N-terminal myristoylation is not sufficient for presynaptic localization (By similarity).</text>
</comment>